<feature type="chain" id="PRO_0000460078" description="Ubiquitin-ribosomal protein eS31 fusion protein">
    <location>
        <begin position="1"/>
        <end position="156"/>
    </location>
</feature>
<feature type="chain" id="PRO_0000460079" description="Ubiquitin" evidence="1">
    <location>
        <begin position="1"/>
        <end position="76"/>
    </location>
</feature>
<feature type="chain" id="PRO_0000460080" description="Small ribosomal subunit protein eS31" evidence="1">
    <location>
        <begin position="77"/>
        <end position="156"/>
    </location>
</feature>
<feature type="domain" description="Ubiquitin-like" evidence="3">
    <location>
        <begin position="1"/>
        <end position="76"/>
    </location>
</feature>
<feature type="zinc finger region" description="C4-type" evidence="1">
    <location>
        <begin position="121"/>
        <end position="144"/>
    </location>
</feature>
<feature type="region of interest" description="Disordered" evidence="4">
    <location>
        <begin position="76"/>
        <end position="95"/>
    </location>
</feature>
<feature type="site" description="Interacts with activating enzyme" evidence="1">
    <location>
        <position position="54"/>
    </location>
</feature>
<feature type="site" description="Essential for function" evidence="1">
    <location>
        <position position="68"/>
    </location>
</feature>
<feature type="site" description="Interacts with activating enzyme" evidence="1">
    <location>
        <position position="72"/>
    </location>
</feature>
<feature type="modified residue" description="Phosphoserine" evidence="1">
    <location>
        <position position="65"/>
    </location>
</feature>
<feature type="modified residue" description="ADP-ribosylglycine" evidence="1">
    <location>
        <position position="76"/>
    </location>
</feature>
<feature type="modified residue" description="N6-acetyllysine" evidence="1">
    <location>
        <position position="104"/>
    </location>
</feature>
<feature type="modified residue" description="N6-acetyllysine" evidence="1">
    <location>
        <position position="113"/>
    </location>
</feature>
<feature type="modified residue" description="N6-acetyllysine" evidence="2">
    <location>
        <position position="152"/>
    </location>
</feature>
<feature type="cross-link" description="Glycyl lysine isopeptide (Lys-Gly) (interchain with G-Cter in ubiquitin)" evidence="1">
    <location>
        <position position="6"/>
    </location>
</feature>
<feature type="cross-link" description="Glycyl lysine isopeptide (Lys-Gly) (interchain with G-Cter in ubiquitin)" evidence="1">
    <location>
        <position position="11"/>
    </location>
</feature>
<feature type="cross-link" description="Glycyl lysine isopeptide (Lys-Gly) (interchain with G-Cter in ubiquitin)" evidence="1">
    <location>
        <position position="27"/>
    </location>
</feature>
<feature type="cross-link" description="Glycyl lysine isopeptide (Lys-Gly) (interchain with G-Cter in ubiquitin)" evidence="1">
    <location>
        <position position="29"/>
    </location>
</feature>
<feature type="cross-link" description="Glycyl lysine isopeptide (Lys-Gly) (interchain with G-Cter in ubiquitin)" evidence="1">
    <location>
        <position position="33"/>
    </location>
</feature>
<feature type="cross-link" description="Glycyl lysine isopeptide (Lys-Gly) (interchain with G-Cter in ubiquitin)" evidence="1">
    <location>
        <position position="48"/>
    </location>
</feature>
<feature type="cross-link" description="Glycyl lysine isopeptide (Lys-Gly) (interchain with G-Cter in ubiquitin)" evidence="1">
    <location>
        <position position="63"/>
    </location>
</feature>
<feature type="cross-link" description="Glycyl lysine isopeptide (Gly-Lys) (interchain with K-? in acceptor proteins)" evidence="1">
    <location>
        <position position="76"/>
    </location>
</feature>
<feature type="cross-link" description="Glycyl lysine isopeptide (Lys-Gly) (interchain with G-Cter in ubiquitin)" evidence="1">
    <location>
        <position position="107"/>
    </location>
</feature>
<feature type="cross-link" description="Glycyl lysine isopeptide (Lys-Gly) (interchain with G-Cter in ubiquitin)" evidence="1">
    <location>
        <position position="113"/>
    </location>
</feature>
<feature type="strand" evidence="46">
    <location>
        <begin position="99"/>
        <end position="101"/>
    </location>
</feature>
<feature type="strand" evidence="45">
    <location>
        <begin position="105"/>
        <end position="107"/>
    </location>
</feature>
<feature type="strand" evidence="45">
    <location>
        <begin position="109"/>
        <end position="112"/>
    </location>
</feature>
<feature type="strand" evidence="47">
    <location>
        <begin position="113"/>
        <end position="118"/>
    </location>
</feature>
<feature type="strand" evidence="45">
    <location>
        <begin position="124"/>
        <end position="126"/>
    </location>
</feature>
<feature type="strand" evidence="44">
    <location>
        <begin position="128"/>
        <end position="131"/>
    </location>
</feature>
<feature type="strand" evidence="44">
    <location>
        <begin position="136"/>
        <end position="140"/>
    </location>
</feature>
<feature type="strand" evidence="47">
    <location>
        <begin position="142"/>
        <end position="144"/>
    </location>
</feature>
<feature type="strand" evidence="45">
    <location>
        <begin position="145"/>
        <end position="147"/>
    </location>
</feature>
<sequence length="156" mass="17965">MQIFVKTLTGKTITLEVEPSDTIENVKAKIQDKEGIPPDQQRLIFAGKQLEDGRTLSDYNIQKESTLHLVLRLRGGAKKRKKKSYTTPKKNKHKRKKVKLAVLKYYKVDENGKISRLRRECPSDECGAGVFMASHFDRHYCGKCCLTYCFNKPEDK</sequence>
<evidence type="ECO:0000250" key="1">
    <source>
        <dbReference type="UniProtKB" id="P62979"/>
    </source>
</evidence>
<evidence type="ECO:0000250" key="2">
    <source>
        <dbReference type="UniProtKB" id="P62983"/>
    </source>
</evidence>
<evidence type="ECO:0000255" key="3">
    <source>
        <dbReference type="PROSITE-ProRule" id="PRU00214"/>
    </source>
</evidence>
<evidence type="ECO:0000256" key="4">
    <source>
        <dbReference type="SAM" id="MobiDB-lite"/>
    </source>
</evidence>
<evidence type="ECO:0000269" key="5">
    <source>
    </source>
</evidence>
<evidence type="ECO:0000269" key="6">
    <source>
    </source>
</evidence>
<evidence type="ECO:0000269" key="7">
    <source>
    </source>
</evidence>
<evidence type="ECO:0000269" key="8">
    <source>
    </source>
</evidence>
<evidence type="ECO:0000269" key="9">
    <source>
    </source>
</evidence>
<evidence type="ECO:0000269" key="10">
    <source>
    </source>
</evidence>
<evidence type="ECO:0000269" key="11">
    <source>
    </source>
</evidence>
<evidence type="ECO:0000269" key="12">
    <source>
    </source>
</evidence>
<evidence type="ECO:0000269" key="13">
    <source>
    </source>
</evidence>
<evidence type="ECO:0000269" key="14">
    <source>
    </source>
</evidence>
<evidence type="ECO:0000269" key="15">
    <source>
    </source>
</evidence>
<evidence type="ECO:0000269" key="16">
    <source>
    </source>
</evidence>
<evidence type="ECO:0000269" key="17">
    <source>
    </source>
</evidence>
<evidence type="ECO:0000305" key="18"/>
<evidence type="ECO:0007744" key="19">
    <source>
        <dbReference type="PDB" id="3JAG"/>
    </source>
</evidence>
<evidence type="ECO:0007744" key="20">
    <source>
        <dbReference type="PDB" id="3JAH"/>
    </source>
</evidence>
<evidence type="ECO:0007744" key="21">
    <source>
        <dbReference type="PDB" id="4D5L"/>
    </source>
</evidence>
<evidence type="ECO:0007744" key="22">
    <source>
        <dbReference type="PDB" id="4D61"/>
    </source>
</evidence>
<evidence type="ECO:0007744" key="23">
    <source>
        <dbReference type="PDB" id="4KZX"/>
    </source>
</evidence>
<evidence type="ECO:0007744" key="24">
    <source>
        <dbReference type="PDB" id="4KZY"/>
    </source>
</evidence>
<evidence type="ECO:0007744" key="25">
    <source>
        <dbReference type="PDB" id="5LZS"/>
    </source>
</evidence>
<evidence type="ECO:0007744" key="26">
    <source>
        <dbReference type="PDB" id="5LZT"/>
    </source>
</evidence>
<evidence type="ECO:0007744" key="27">
    <source>
        <dbReference type="PDB" id="6D90"/>
    </source>
</evidence>
<evidence type="ECO:0007744" key="28">
    <source>
        <dbReference type="PDB" id="6D9J"/>
    </source>
</evidence>
<evidence type="ECO:0007744" key="29">
    <source>
        <dbReference type="PDB" id="6GZ3"/>
    </source>
</evidence>
<evidence type="ECO:0007744" key="30">
    <source>
        <dbReference type="PDB" id="6HCF"/>
    </source>
</evidence>
<evidence type="ECO:0007744" key="31">
    <source>
        <dbReference type="PDB" id="6HCJ"/>
    </source>
</evidence>
<evidence type="ECO:0007744" key="32">
    <source>
        <dbReference type="PDB" id="6MTB"/>
    </source>
</evidence>
<evidence type="ECO:0007744" key="33">
    <source>
        <dbReference type="PDB" id="6MTC"/>
    </source>
</evidence>
<evidence type="ECO:0007744" key="34">
    <source>
        <dbReference type="PDB" id="6P4G"/>
    </source>
</evidence>
<evidence type="ECO:0007744" key="35">
    <source>
        <dbReference type="PDB" id="6P4H"/>
    </source>
</evidence>
<evidence type="ECO:0007744" key="36">
    <source>
        <dbReference type="PDB" id="6R5Q"/>
    </source>
</evidence>
<evidence type="ECO:0007744" key="37">
    <source>
        <dbReference type="PDB" id="6R6G"/>
    </source>
</evidence>
<evidence type="ECO:0007744" key="38">
    <source>
        <dbReference type="PDB" id="6SGC"/>
    </source>
</evidence>
<evidence type="ECO:0007744" key="39">
    <source>
        <dbReference type="PDB" id="6W2S"/>
    </source>
</evidence>
<evidence type="ECO:0007744" key="40">
    <source>
        <dbReference type="PDB" id="6W2T"/>
    </source>
</evidence>
<evidence type="ECO:0007744" key="41">
    <source>
        <dbReference type="PDB" id="7A01"/>
    </source>
</evidence>
<evidence type="ECO:0007744" key="42">
    <source>
        <dbReference type="PDB" id="7SYI"/>
    </source>
</evidence>
<evidence type="ECO:0007744" key="43">
    <source>
        <dbReference type="PDB" id="7SYJ"/>
    </source>
</evidence>
<evidence type="ECO:0007829" key="44">
    <source>
        <dbReference type="PDB" id="6P4G"/>
    </source>
</evidence>
<evidence type="ECO:0007829" key="45">
    <source>
        <dbReference type="PDB" id="6YAL"/>
    </source>
</evidence>
<evidence type="ECO:0007829" key="46">
    <source>
        <dbReference type="PDB" id="7SYS"/>
    </source>
</evidence>
<evidence type="ECO:0007829" key="47">
    <source>
        <dbReference type="PDB" id="8P03"/>
    </source>
</evidence>
<organism>
    <name type="scientific">Oryctolagus cuniculus</name>
    <name type="common">Rabbit</name>
    <dbReference type="NCBI Taxonomy" id="9986"/>
    <lineage>
        <taxon>Eukaryota</taxon>
        <taxon>Metazoa</taxon>
        <taxon>Chordata</taxon>
        <taxon>Craniata</taxon>
        <taxon>Vertebrata</taxon>
        <taxon>Euteleostomi</taxon>
        <taxon>Mammalia</taxon>
        <taxon>Eutheria</taxon>
        <taxon>Euarchontoglires</taxon>
        <taxon>Glires</taxon>
        <taxon>Lagomorpha</taxon>
        <taxon>Leporidae</taxon>
        <taxon>Oryctolagus</taxon>
    </lineage>
</organism>
<protein>
    <recommendedName>
        <fullName>Ubiquitin-ribosomal protein eS31 fusion protein</fullName>
    </recommendedName>
    <component>
        <recommendedName>
            <fullName>Ubiquitin</fullName>
        </recommendedName>
    </component>
    <component>
        <recommendedName>
            <fullName>Small ribosomal subunit protein eS31</fullName>
        </recommendedName>
        <alternativeName>
            <fullName>40S ribosomal protein S27a</fullName>
        </alternativeName>
    </component>
</protein>
<gene>
    <name type="primary">RPS27A</name>
</gene>
<comment type="function">
    <molecule>Ubiquitin</molecule>
    <text evidence="1">Exists either covalently attached to another protein, or free (unanchored). When covalently bound, it is conjugated to target proteins via an isopeptide bond either as a monomer (monoubiquitin), a polymer linked via different Lys residues of the ubiquitin (polyubiquitin chains) or a linear polymer linked via the initiator Met of the ubiquitin (linear polyubiquitin chains). Polyubiquitin chains, when attached to a target protein, have different functions depending on the Lys residue of the ubiquitin that is linked: Lys-6-linked may be involved in DNA repair; Lys-11-linked is involved in ERAD (endoplasmic reticulum-associated degradation) and in cell-cycle regulation; Lys-29-linked is involved in proteotoxic stress response and cell cycle; Lys-33-linked is involved in kinase modification; Lys-48-linked is involved in protein degradation via the proteasome; Lys-63-linked is involved in endocytosis, DNA-damage responses as well as in signaling processes leading to activation of the transcription factor NF-kappa-B. Linear polymer chains formed via attachment by the initiator Met lead to cell signaling. Ubiquitin is usually conjugated to Lys residues of target proteins, however, in rare cases, conjugation to Cys or Ser residues has been observed. When polyubiquitin is free (unanchored-polyubiquitin), it also has distinct roles, such as in activation of protein kinases, and in signaling.</text>
</comment>
<comment type="function">
    <molecule>Small ribosomal subunit protein eS31</molecule>
    <text evidence="5 6 8 12">Component of the 40S subunit of the ribosome (PubMed:23873042, PubMed:25601755, PubMed:27863242, PubMed:30517857). Part of the small subunit (SSU) processome, first precursor of the small eukaryotic ribosomal subunit (PubMed:23873042, PubMed:25601755, PubMed:27863242, PubMed:30517857). During the assembly of the SSU processome in the nucleolus, many ribosome biogenesis factors, an RNA chaperone and ribosomal proteins associate with the nascent pre-rRNA and work in concert to generate RNA folding, modifications, rearrangements and cleavage as well as targeted degradation of pre-ribosomal RNA by the RNA exosome (PubMed:23873042, PubMed:25601755, PubMed:27863242, PubMed:30517857).</text>
</comment>
<comment type="subunit">
    <molecule>Small ribosomal subunit protein eS31</molecule>
    <text evidence="5 6 7 8 9 10 11 12 13 14 15 16 17">Part of the 40S ribosomal subunit. Part of the small subunit (SSU) processome, composed of more than 70 proteins and the RNA chaperone small nucleolar RNA (snoRNA) U3.</text>
</comment>
<comment type="subcellular location">
    <molecule>Small ribosomal subunit protein eS31</molecule>
    <subcellularLocation>
        <location evidence="5 6 7 8 9 10 11 12 13 14 15 16 17">Cytoplasm</location>
    </subcellularLocation>
    <subcellularLocation>
        <location evidence="1">Nucleus</location>
        <location evidence="1">Nucleolus</location>
    </subcellularLocation>
</comment>
<comment type="subcellular location">
    <molecule>Ubiquitin</molecule>
    <subcellularLocation>
        <location evidence="1">Cytoplasm</location>
    </subcellularLocation>
    <subcellularLocation>
        <location evidence="1">Nucleus</location>
    </subcellularLocation>
</comment>
<comment type="PTM">
    <molecule>Ubiquitin</molecule>
    <text evidence="1">Phosphorylated at Ser-65 by PINK1 during mitophagy. Phosphorylated ubiquitin specifically binds and activates parkin (PRKN), triggering mitophagy. Phosphorylation does not affect E1-mediated E2 charging of ubiquitin but affects discharging of E2 enzymes to form polyubiquitin chains. It also affects deubiquitination by deubiquitinase enzymes such as USP30.</text>
</comment>
<comment type="PTM">
    <molecule>Ubiquitin</molecule>
    <text evidence="1">Mono-ADP-ribosylated at the C-terminus by PARP9, a component of the PPAR9-DTX3L complex. ADP-ribosylation requires processing by E1 and E2 enzymes and prevents ubiquitin conjugation to substrates such as histones.</text>
</comment>
<comment type="PTM">
    <molecule>Small ribosomal subunit protein eS31</molecule>
    <text evidence="1">Monoubiquitinated at Lys-107 and Lys-113 by RNF25 in response to ribosome collisions (ribosome stalling): ubiquitination promotes subsequent activation of RNF14, leading to EEF1A1 ubiquitination and degradation and rescue of stalled ribosomes. Deubiquitination at Lys-113 by USP16 is required for maturation of the 40S ribosomal complex.</text>
</comment>
<comment type="miscellaneous">
    <text evidence="1">Ubiquitin is encoded by 4 different genes. UBA52 and RPS27A genes code for a single copy of ubiquitin fused to the ribosomal proteins eL40 and eS31, respectively. UBB and UBC genes code for a polyubiquitin precursor with exact head to tail repeats, the number of repeats differ between species and strains.</text>
</comment>
<comment type="miscellaneous">
    <text evidence="1">For a better understanding, features related to ubiquitin are only indicated for the first chain.</text>
</comment>
<comment type="similarity">
    <text evidence="18">In the N-terminal section; belongs to the ubiquitin family.</text>
</comment>
<comment type="similarity">
    <text evidence="18">In the C-terminal section; belongs to the eukaryotic ribosomal protein eS31 family.</text>
</comment>
<accession>G1SK22</accession>
<keyword id="KW-0002">3D-structure</keyword>
<keyword id="KW-0007">Acetylation</keyword>
<keyword id="KW-0013">ADP-ribosylation</keyword>
<keyword id="KW-0963">Cytoplasm</keyword>
<keyword id="KW-1017">Isopeptide bond</keyword>
<keyword id="KW-0479">Metal-binding</keyword>
<keyword id="KW-0539">Nucleus</keyword>
<keyword id="KW-0597">Phosphoprotein</keyword>
<keyword id="KW-1185">Reference proteome</keyword>
<keyword id="KW-0687">Ribonucleoprotein</keyword>
<keyword id="KW-0689">Ribosomal protein</keyword>
<keyword id="KW-0832">Ubl conjugation</keyword>
<keyword id="KW-0862">Zinc</keyword>
<keyword id="KW-0863">Zinc-finger</keyword>
<reference key="1">
    <citation type="journal article" date="2011" name="Nature">
        <title>A high-resolution map of human evolutionary constraint using 29 mammals.</title>
        <authorList>
            <person name="Lindblad-Toh K."/>
            <person name="Garber M."/>
            <person name="Zuk O."/>
            <person name="Lin M.F."/>
            <person name="Parker B.J."/>
            <person name="Washietl S."/>
            <person name="Kheradpour P."/>
            <person name="Ernst J."/>
            <person name="Jordan G."/>
            <person name="Mauceli E."/>
            <person name="Ward L.D."/>
            <person name="Lowe C.B."/>
            <person name="Holloway A.K."/>
            <person name="Clamp M."/>
            <person name="Gnerre S."/>
            <person name="Alfoldi J."/>
            <person name="Beal K."/>
            <person name="Chang J."/>
            <person name="Clawson H."/>
            <person name="Cuff J."/>
            <person name="Di Palma F."/>
            <person name="Fitzgerald S."/>
            <person name="Flicek P."/>
            <person name="Guttman M."/>
            <person name="Hubisz M.J."/>
            <person name="Jaffe D.B."/>
            <person name="Jungreis I."/>
            <person name="Kent W.J."/>
            <person name="Kostka D."/>
            <person name="Lara M."/>
            <person name="Martins A.L."/>
            <person name="Massingham T."/>
            <person name="Moltke I."/>
            <person name="Raney B.J."/>
            <person name="Rasmussen M.D."/>
            <person name="Robinson J."/>
            <person name="Stark A."/>
            <person name="Vilella A.J."/>
            <person name="Wen J."/>
            <person name="Xie X."/>
            <person name="Zody M.C."/>
            <person name="Baldwin J."/>
            <person name="Bloom T."/>
            <person name="Chin C.W."/>
            <person name="Heiman D."/>
            <person name="Nicol R."/>
            <person name="Nusbaum C."/>
            <person name="Young S."/>
            <person name="Wilkinson J."/>
            <person name="Worley K.C."/>
            <person name="Kovar C.L."/>
            <person name="Muzny D.M."/>
            <person name="Gibbs R.A."/>
            <person name="Cree A."/>
            <person name="Dihn H.H."/>
            <person name="Fowler G."/>
            <person name="Jhangiani S."/>
            <person name="Joshi V."/>
            <person name="Lee S."/>
            <person name="Lewis L.R."/>
            <person name="Nazareth L.V."/>
            <person name="Okwuonu G."/>
            <person name="Santibanez J."/>
            <person name="Warren W.C."/>
            <person name="Mardis E.R."/>
            <person name="Weinstock G.M."/>
            <person name="Wilson R.K."/>
            <person name="Delehaunty K."/>
            <person name="Dooling D."/>
            <person name="Fronik C."/>
            <person name="Fulton L."/>
            <person name="Fulton B."/>
            <person name="Graves T."/>
            <person name="Minx P."/>
            <person name="Sodergren E."/>
            <person name="Birney E."/>
            <person name="Margulies E.H."/>
            <person name="Herrero J."/>
            <person name="Green E.D."/>
            <person name="Haussler D."/>
            <person name="Siepel A."/>
            <person name="Goldman N."/>
            <person name="Pollard K.S."/>
            <person name="Pedersen J.S."/>
            <person name="Lander E.S."/>
            <person name="Kellis M."/>
        </authorList>
    </citation>
    <scope>NUCLEOTIDE SEQUENCE [LARGE SCALE GENOMIC DNA]</scope>
    <source>
        <strain>Thorbecke</strain>
    </source>
</reference>
<reference evidence="23 24" key="2">
    <citation type="journal article" date="2013" name="Nature">
        <title>The initiation of mammalian protein synthesis and mRNA scanning mechanism.</title>
        <authorList>
            <person name="Lomakin I.B."/>
            <person name="Steitz T.A."/>
        </authorList>
    </citation>
    <scope>X-RAY CRYSTALLOGRAPHY (7.01 ANGSTROMS) OF 77-156 OF 40S RIBOSOME</scope>
    <scope>FUNCTION</scope>
    <scope>SUBUNIT</scope>
    <scope>SUBCELLULAR LOCATION</scope>
</reference>
<reference evidence="21 22" key="3">
    <citation type="journal article" date="2015" name="Mol. Cell">
        <title>Cryo-EM of ribosomal 80S complexes with termination factors reveals the translocated cricket paralysis virus IRES.</title>
        <authorList>
            <person name="Muhs M."/>
            <person name="Hilal T."/>
            <person name="Mielke T."/>
            <person name="Skabkin M.A."/>
            <person name="Sanbonmatsu K.Y."/>
            <person name="Pestova T.V."/>
            <person name="Spahn C.M."/>
        </authorList>
    </citation>
    <scope>STRUCTURE BY ELECTRON MICROSCOPY (9.00 ANGSTROMS) OF 77-156 OF RIBOSOME</scope>
    <scope>FUNCTION</scope>
    <scope>SUBUNIT</scope>
    <scope>SUBCELLULAR LOCATION</scope>
</reference>
<reference evidence="19 20" key="4">
    <citation type="journal article" date="2015" name="Nature">
        <title>Structural basis for stop codon recognition in eukaryotes.</title>
        <authorList>
            <person name="Brown A."/>
            <person name="Shao S."/>
            <person name="Murray J."/>
            <person name="Hegde R.S."/>
            <person name="Ramakrishnan V."/>
        </authorList>
    </citation>
    <scope>STRUCTURE BY ELECTRON MICROSCOPY (3.45 ANGSTROMS) OF 77-156 OF RIBOSOME</scope>
    <scope>SUBUNIT</scope>
    <scope>SUBCELLULAR LOCATION</scope>
</reference>
<reference evidence="25 26" key="5">
    <citation type="journal article" date="2016" name="Cell">
        <title>Decoding mammalian ribosome-mRNA states by translational GTPase complexes.</title>
        <authorList>
            <person name="Shao S."/>
            <person name="Murray J."/>
            <person name="Brown A."/>
            <person name="Taunton J."/>
            <person name="Ramakrishnan V."/>
            <person name="Hegde R.S."/>
        </authorList>
    </citation>
    <scope>STRUCTURE BY ELECTRON MICROSCOPY (3.31 ANGSTROMS) OF 77-156 OF RIBOSOME</scope>
    <scope>FUNCTION</scope>
    <scope>SUBUNIT</scope>
    <scope>SUBCELLULAR LOCATION</scope>
</reference>
<reference evidence="29" key="6">
    <citation type="journal article" date="2018" name="Cell Rep.">
        <title>tRNA translocation by the eukaryotic 80S ribosome and the impact of GTP hydrolysis.</title>
        <authorList>
            <person name="Flis J."/>
            <person name="Holm M."/>
            <person name="Rundlet E.J."/>
            <person name="Loerke J."/>
            <person name="Hilal T."/>
            <person name="Dabrowski M."/>
            <person name="Burger J."/>
            <person name="Mielke T."/>
            <person name="Blanchard S.C."/>
            <person name="Spahn C.M.T."/>
            <person name="Budkevich T.V."/>
        </authorList>
    </citation>
    <scope>STRUCTURE BY ELECTRON MICROSCOPY (3.60 ANGSTROMS) OF 77-156 OF 15-204 OF RIBOSOME</scope>
    <scope>FUNCTION</scope>
    <scope>SUBUNIT</scope>
    <scope>SUBCELLULAR LOCATION</scope>
</reference>
<reference evidence="27 28" key="7">
    <citation type="journal article" date="2018" name="Elife">
        <title>Dual tRNA mimicry in the Cricket paralysis virus IRES uncovers an unexpected similarity with the Hepatitis C Virus IRES.</title>
        <authorList>
            <person name="Pisareva V.P."/>
            <person name="Pisarev A.V."/>
            <person name="Fernandez I.S."/>
        </authorList>
    </citation>
    <scope>STRUCTURE BY ELECTRON MICROSCOPY (3.20 ANGSTROMS) OF 77-156 OF RIBOSOME</scope>
    <scope>SUBUNIT</scope>
    <scope>SUBCELLULAR LOCATION</scope>
</reference>
<reference evidence="32 33" key="8">
    <citation type="journal article" date="2018" name="Elife">
        <title>Structures of translationally inactive mammalian ribosomes.</title>
        <authorList>
            <person name="Brown A."/>
            <person name="Baird M.R."/>
            <person name="Yip M.C."/>
            <person name="Murray J."/>
            <person name="Shao S."/>
        </authorList>
    </citation>
    <scope>STRUCTURE BY ELECTRON MICROSCOPY (3.30 ANGSTROMS) OF 77-156 OF RIBOSOME</scope>
    <scope>SUBUNIT</scope>
    <scope>SUBCELLULAR LOCATION</scope>
</reference>
<reference evidence="30 31" key="9">
    <citation type="journal article" date="2018" name="Mol. Cell">
        <title>ZNF598 is a quality control sensor of collided ribosomes.</title>
        <authorList>
            <person name="Juszkiewicz S."/>
            <person name="Chandrasekaran V."/>
            <person name="Lin Z."/>
            <person name="Kraatz S."/>
            <person name="Ramakrishnan V."/>
            <person name="Hegde R.S."/>
        </authorList>
    </citation>
    <scope>STRUCTURE BY ELECTRON MICROSCOPY (3.80 ANGSTROMS) OF 77-156 OF RIBOSOME</scope>
    <scope>SUBUNIT</scope>
    <scope>SUBCELLULAR LOCATION</scope>
</reference>
<reference evidence="36 37" key="10">
    <citation type="journal article" date="2019" name="Elife">
        <title>Structural and mutational analysis of the ribosome-arresting human XBP1u.</title>
        <authorList>
            <person name="Shanmuganathan V."/>
            <person name="Schiller N."/>
            <person name="Magoulopoulou A."/>
            <person name="Cheng J."/>
            <person name="Braunger K."/>
            <person name="Cymer F."/>
            <person name="Berninghausen O."/>
            <person name="Beatrix B."/>
            <person name="Kohno K."/>
            <person name="von Heijne G."/>
            <person name="Beckmann R."/>
        </authorList>
    </citation>
    <scope>STRUCTURE BY ELECTRON MICROSCOPY (3.00 ANGSTROMS) OF 77-156 OF RIBOSOME</scope>
    <scope>SUBUNIT</scope>
    <scope>SUBCELLULAR LOCATION</scope>
</reference>
<reference evidence="34 35" key="11">
    <citation type="journal article" date="2019" name="EMBO J.">
        <title>The Israeli acute paralysis virus IRES captures host ribosomes by mimicking a ribosomal state with hybrid tRNAs.</title>
        <authorList>
            <person name="Acosta-Reyes F."/>
            <person name="Neupane R."/>
            <person name="Frank J."/>
            <person name="Fernandez I.S."/>
        </authorList>
    </citation>
    <scope>STRUCTURE BY ELECTRON MICROSCOPY (3.10 ANGSTROMS) OF 77-156 OF RIBOSOME</scope>
    <scope>SUBUNIT</scope>
    <scope>SUBCELLULAR LOCATION</scope>
</reference>
<reference evidence="38" key="12">
    <citation type="journal article" date="2019" name="Nat. Struct. Mol. Biol.">
        <title>Mechanism of ribosome stalling during translation of a poly(A) tail.</title>
        <authorList>
            <person name="Chandrasekaran V."/>
            <person name="Juszkiewicz S."/>
            <person name="Choi J."/>
            <person name="Puglisi J.D."/>
            <person name="Brown A."/>
            <person name="Shao S."/>
            <person name="Ramakrishnan V."/>
            <person name="Hegde R.S."/>
        </authorList>
    </citation>
    <scope>STRUCTURE BY ELECTRON MICROSCOPY (2.80 ANGSTROMS) OF 77-156 OF RIBOSOME</scope>
    <scope>SUBUNIT</scope>
    <scope>SUBCELLULAR LOCATION</scope>
</reference>
<reference evidence="41" key="13">
    <citation type="journal article" date="2020" name="Cell Rep.">
        <title>The Halastavi arva virus intergenic region IRES promotes translation by the simplest possible initiation mechanism.</title>
        <authorList>
            <person name="Abaeva I.S."/>
            <person name="Vicens Q."/>
            <person name="Bochler A."/>
            <person name="Soufari H."/>
            <person name="Simonetti A."/>
            <person name="Pestova T.V."/>
            <person name="Hashem Y."/>
            <person name="Hellen C.U.T."/>
        </authorList>
    </citation>
    <scope>STRUCTURE BY ELECTRON MICROSCOPY (3.49 ANGSTROMS) OF 77-156 OF 2-110 OF RIBOSOME</scope>
    <scope>SUBCELLULAR LOCATION</scope>
    <scope>SUBUNIT</scope>
</reference>
<reference evidence="39 40" key="14">
    <citation type="journal article" date="2020" name="Elife">
        <title>A complex IRES at the 5'-UTR of a viral mRNA assembles a functional 48S complex via an uAUG intermediate.</title>
        <authorList>
            <person name="Neupane R."/>
            <person name="Pisareva V.P."/>
            <person name="Rodriguez C.F."/>
            <person name="Pisarev A.V."/>
            <person name="Fernandez I.S."/>
        </authorList>
    </citation>
    <scope>STRUCTURE BY ELECTRON MICROSCOPY (3.00 ANGSTROMS) OF 77-156 OF RIBOSOME</scope>
    <scope>SUBCELLULAR LOCATION</scope>
    <scope>SUBUNIT</scope>
</reference>
<reference evidence="42 43" key="15">
    <citation type="journal article" date="2022" name="EMBO J.">
        <title>Molecular architecture of 40S translation initiation complexes on the hepatitis C virus IRES.</title>
        <authorList>
            <person name="Brown Z.P."/>
            <person name="Abaeva I.S."/>
            <person name="De S."/>
            <person name="Hellen C.U.T."/>
            <person name="Pestova T.V."/>
            <person name="Frank J."/>
        </authorList>
    </citation>
    <scope>STRUCTURE BY ELECTRON MICROSCOPY (3.50 ANGSTROMS) OF RIBOSOME</scope>
    <scope>SUBCELLULAR LOCATION</scope>
    <scope>SUBUNIT</scope>
</reference>
<proteinExistence type="evidence at protein level"/>
<dbReference type="RefSeq" id="XP_002724420.1">
    <property type="nucleotide sequence ID" value="XM_002724374.5"/>
</dbReference>
<dbReference type="RefSeq" id="XP_051698845.1">
    <property type="nucleotide sequence ID" value="XM_051842885.2"/>
</dbReference>
<dbReference type="RefSeq" id="XP_069925205.1">
    <property type="nucleotide sequence ID" value="XM_070069104.1"/>
</dbReference>
<dbReference type="PDB" id="3JAG">
    <property type="method" value="EM"/>
    <property type="resolution" value="3.65 A"/>
    <property type="chains" value="ff=83-151"/>
</dbReference>
<dbReference type="PDB" id="3JAH">
    <property type="method" value="EM"/>
    <property type="resolution" value="3.45 A"/>
    <property type="chains" value="ff=83-151"/>
</dbReference>
<dbReference type="PDB" id="3JAI">
    <property type="method" value="EM"/>
    <property type="resolution" value="3.65 A"/>
    <property type="chains" value="ff=83-151"/>
</dbReference>
<dbReference type="PDB" id="4D5L">
    <property type="method" value="EM"/>
    <property type="resolution" value="9.00 A"/>
    <property type="chains" value="f=18-156"/>
</dbReference>
<dbReference type="PDB" id="4D61">
    <property type="method" value="EM"/>
    <property type="resolution" value="9.00 A"/>
    <property type="chains" value="f=18-156"/>
</dbReference>
<dbReference type="PDB" id="4KZX">
    <property type="method" value="X-ray"/>
    <property type="resolution" value="7.81 A"/>
    <property type="chains" value="f=18-156"/>
</dbReference>
<dbReference type="PDB" id="4KZY">
    <property type="method" value="X-ray"/>
    <property type="resolution" value="7.01 A"/>
    <property type="chains" value="f=18-156"/>
</dbReference>
<dbReference type="PDB" id="4KZZ">
    <property type="method" value="X-ray"/>
    <property type="resolution" value="7.03 A"/>
    <property type="chains" value="f=18-156"/>
</dbReference>
<dbReference type="PDB" id="5K0Y">
    <property type="method" value="EM"/>
    <property type="resolution" value="5.80 A"/>
    <property type="chains" value="p=82-152"/>
</dbReference>
<dbReference type="PDB" id="5LZS">
    <property type="method" value="EM"/>
    <property type="resolution" value="3.31 A"/>
    <property type="chains" value="ff=18-156"/>
</dbReference>
<dbReference type="PDB" id="5LZT">
    <property type="method" value="EM"/>
    <property type="resolution" value="3.65 A"/>
    <property type="chains" value="ff=18-156"/>
</dbReference>
<dbReference type="PDB" id="5LZU">
    <property type="method" value="EM"/>
    <property type="resolution" value="3.75 A"/>
    <property type="chains" value="ff=18-156"/>
</dbReference>
<dbReference type="PDB" id="5LZV">
    <property type="method" value="EM"/>
    <property type="resolution" value="3.35 A"/>
    <property type="chains" value="ff=18-156"/>
</dbReference>
<dbReference type="PDB" id="5LZW">
    <property type="method" value="EM"/>
    <property type="resolution" value="3.53 A"/>
    <property type="chains" value="ff=18-156"/>
</dbReference>
<dbReference type="PDB" id="5LZX">
    <property type="method" value="EM"/>
    <property type="resolution" value="3.67 A"/>
    <property type="chains" value="ff=18-156"/>
</dbReference>
<dbReference type="PDB" id="5LZY">
    <property type="method" value="EM"/>
    <property type="resolution" value="3.99 A"/>
    <property type="chains" value="ff=18-156"/>
</dbReference>
<dbReference type="PDB" id="5LZZ">
    <property type="method" value="EM"/>
    <property type="resolution" value="3.47 A"/>
    <property type="chains" value="ff=18-156"/>
</dbReference>
<dbReference type="PDB" id="6D90">
    <property type="method" value="EM"/>
    <property type="resolution" value="3.20 A"/>
    <property type="chains" value="gg=18-156"/>
</dbReference>
<dbReference type="PDB" id="6D9J">
    <property type="method" value="EM"/>
    <property type="resolution" value="3.20 A"/>
    <property type="chains" value="gg=18-156"/>
</dbReference>
<dbReference type="PDB" id="6GZ3">
    <property type="method" value="EM"/>
    <property type="resolution" value="3.60 A"/>
    <property type="chains" value="Bf=79-151"/>
</dbReference>
<dbReference type="PDB" id="6HCF">
    <property type="method" value="EM"/>
    <property type="resolution" value="3.90 A"/>
    <property type="chains" value="g1=18-156"/>
</dbReference>
<dbReference type="PDB" id="6HCJ">
    <property type="method" value="EM"/>
    <property type="resolution" value="3.80 A"/>
    <property type="chains" value="g2=18-156"/>
</dbReference>
<dbReference type="PDB" id="6HCM">
    <property type="method" value="EM"/>
    <property type="resolution" value="6.80 A"/>
    <property type="chains" value="g1=18-156"/>
</dbReference>
<dbReference type="PDB" id="6HCQ">
    <property type="method" value="EM"/>
    <property type="resolution" value="6.50 A"/>
    <property type="chains" value="g2=18-156"/>
</dbReference>
<dbReference type="PDB" id="6MTB">
    <property type="method" value="EM"/>
    <property type="resolution" value="3.60 A"/>
    <property type="chains" value="ff=83-150"/>
</dbReference>
<dbReference type="PDB" id="6MTC">
    <property type="method" value="EM"/>
    <property type="resolution" value="3.40 A"/>
    <property type="chains" value="ff=83-150"/>
</dbReference>
<dbReference type="PDB" id="6MTD">
    <property type="method" value="EM"/>
    <property type="resolution" value="3.30 A"/>
    <property type="chains" value="ff=83-150"/>
</dbReference>
<dbReference type="PDB" id="6MTE">
    <property type="method" value="EM"/>
    <property type="resolution" value="3.40 A"/>
    <property type="chains" value="ff=83-150"/>
</dbReference>
<dbReference type="PDB" id="6P4G">
    <property type="method" value="EM"/>
    <property type="resolution" value="3.10 A"/>
    <property type="chains" value="g=18-156"/>
</dbReference>
<dbReference type="PDB" id="6P4H">
    <property type="method" value="EM"/>
    <property type="resolution" value="3.20 A"/>
    <property type="chains" value="g=18-156"/>
</dbReference>
<dbReference type="PDB" id="6P5I">
    <property type="method" value="EM"/>
    <property type="resolution" value="3.10 A"/>
    <property type="chains" value="g=18-156"/>
</dbReference>
<dbReference type="PDB" id="6P5J">
    <property type="method" value="EM"/>
    <property type="resolution" value="3.10 A"/>
    <property type="chains" value="g=18-156"/>
</dbReference>
<dbReference type="PDB" id="6P5K">
    <property type="method" value="EM"/>
    <property type="resolution" value="3.10 A"/>
    <property type="chains" value="g=18-156"/>
</dbReference>
<dbReference type="PDB" id="6P5N">
    <property type="method" value="EM"/>
    <property type="resolution" value="3.20 A"/>
    <property type="chains" value="g=18-156"/>
</dbReference>
<dbReference type="PDB" id="6R5Q">
    <property type="method" value="EM"/>
    <property type="resolution" value="3.00 A"/>
    <property type="chains" value="0=83-150"/>
</dbReference>
<dbReference type="PDB" id="6R6G">
    <property type="method" value="EM"/>
    <property type="resolution" value="3.70 A"/>
    <property type="chains" value="0=83-150"/>
</dbReference>
<dbReference type="PDB" id="6R6P">
    <property type="method" value="EM"/>
    <property type="resolution" value="3.10 A"/>
    <property type="chains" value="0=83-150"/>
</dbReference>
<dbReference type="PDB" id="6R7Q">
    <property type="method" value="EM"/>
    <property type="resolution" value="3.90 A"/>
    <property type="chains" value="0=83-150"/>
</dbReference>
<dbReference type="PDB" id="6SGC">
    <property type="method" value="EM"/>
    <property type="resolution" value="2.80 A"/>
    <property type="chains" value="g1=18-156"/>
</dbReference>
<dbReference type="PDB" id="6W2S">
    <property type="method" value="EM"/>
    <property type="resolution" value="3.00 A"/>
    <property type="chains" value="g=18-156"/>
</dbReference>
<dbReference type="PDB" id="6W2T">
    <property type="method" value="EM"/>
    <property type="resolution" value="3.36 A"/>
    <property type="chains" value="g=18-156"/>
</dbReference>
<dbReference type="PDB" id="6YAL">
    <property type="method" value="EM"/>
    <property type="resolution" value="3.00 A"/>
    <property type="chains" value="f=82-152"/>
</dbReference>
<dbReference type="PDB" id="6YAM">
    <property type="method" value="EM"/>
    <property type="resolution" value="3.60 A"/>
    <property type="chains" value="f=82-152"/>
</dbReference>
<dbReference type="PDB" id="6YAN">
    <property type="method" value="EM"/>
    <property type="resolution" value="3.48 A"/>
    <property type="chains" value="f=82-152"/>
</dbReference>
<dbReference type="PDB" id="7A01">
    <property type="method" value="EM"/>
    <property type="resolution" value="3.60 A"/>
    <property type="chains" value="Q3=83-150"/>
</dbReference>
<dbReference type="PDB" id="7MDZ">
    <property type="method" value="EM"/>
    <property type="resolution" value="3.20 A"/>
    <property type="chains" value="ff=18-156"/>
</dbReference>
<dbReference type="PDB" id="7NWG">
    <property type="method" value="EM"/>
    <property type="resolution" value="3.80 A"/>
    <property type="chains" value="g2=83-150"/>
</dbReference>
<dbReference type="PDB" id="7O7Y">
    <property type="method" value="EM"/>
    <property type="resolution" value="2.20 A"/>
    <property type="chains" value="AC=18-156"/>
</dbReference>
<dbReference type="PDB" id="7O7Z">
    <property type="method" value="EM"/>
    <property type="resolution" value="2.40 A"/>
    <property type="chains" value="AC=18-156"/>
</dbReference>
<dbReference type="PDB" id="7O80">
    <property type="method" value="EM"/>
    <property type="resolution" value="2.90 A"/>
    <property type="chains" value="AC=18-156"/>
</dbReference>
<dbReference type="PDB" id="7O81">
    <property type="method" value="EM"/>
    <property type="resolution" value="3.10 A"/>
    <property type="chains" value="AC=18-156"/>
</dbReference>
<dbReference type="PDB" id="7SYG">
    <property type="method" value="EM"/>
    <property type="resolution" value="4.30 A"/>
    <property type="chains" value="g=18-156"/>
</dbReference>
<dbReference type="PDB" id="7SYH">
    <property type="method" value="EM"/>
    <property type="resolution" value="4.60 A"/>
    <property type="chains" value="g=18-156"/>
</dbReference>
<dbReference type="PDB" id="7SYI">
    <property type="method" value="EM"/>
    <property type="resolution" value="4.50 A"/>
    <property type="chains" value="g=77-156"/>
</dbReference>
<dbReference type="PDB" id="7SYJ">
    <property type="method" value="EM"/>
    <property type="resolution" value="4.80 A"/>
    <property type="chains" value="g=77-156"/>
</dbReference>
<dbReference type="PDB" id="7SYK">
    <property type="method" value="EM"/>
    <property type="resolution" value="4.20 A"/>
    <property type="chains" value="g=18-156"/>
</dbReference>
<dbReference type="PDB" id="7SYL">
    <property type="method" value="EM"/>
    <property type="resolution" value="4.50 A"/>
    <property type="chains" value="g=18-156"/>
</dbReference>
<dbReference type="PDB" id="7SYM">
    <property type="method" value="EM"/>
    <property type="resolution" value="4.80 A"/>
    <property type="chains" value="g=18-156"/>
</dbReference>
<dbReference type="PDB" id="7SYN">
    <property type="method" value="EM"/>
    <property type="resolution" value="4.00 A"/>
    <property type="chains" value="g=18-156"/>
</dbReference>
<dbReference type="PDB" id="7SYO">
    <property type="method" value="EM"/>
    <property type="resolution" value="4.60 A"/>
    <property type="chains" value="g=18-156"/>
</dbReference>
<dbReference type="PDB" id="7SYP">
    <property type="method" value="EM"/>
    <property type="resolution" value="4.00 A"/>
    <property type="chains" value="g=18-156"/>
</dbReference>
<dbReference type="PDB" id="7SYQ">
    <property type="method" value="EM"/>
    <property type="resolution" value="3.80 A"/>
    <property type="chains" value="g=18-156"/>
</dbReference>
<dbReference type="PDB" id="7SYR">
    <property type="method" value="EM"/>
    <property type="resolution" value="3.60 A"/>
    <property type="chains" value="g=18-156"/>
</dbReference>
<dbReference type="PDB" id="7SYS">
    <property type="method" value="EM"/>
    <property type="resolution" value="3.50 A"/>
    <property type="chains" value="g=77-156"/>
</dbReference>
<dbReference type="PDB" id="7SYT">
    <property type="method" value="EM"/>
    <property type="resolution" value="4.40 A"/>
    <property type="chains" value="g=18-156"/>
</dbReference>
<dbReference type="PDB" id="7SYU">
    <property type="method" value="EM"/>
    <property type="resolution" value="4.60 A"/>
    <property type="chains" value="g=18-156"/>
</dbReference>
<dbReference type="PDB" id="7SYV">
    <property type="method" value="EM"/>
    <property type="resolution" value="3.90 A"/>
    <property type="chains" value="g=18-156"/>
</dbReference>
<dbReference type="PDB" id="7SYW">
    <property type="method" value="EM"/>
    <property type="resolution" value="3.70 A"/>
    <property type="chains" value="g=18-156"/>
</dbReference>
<dbReference type="PDB" id="7SYX">
    <property type="method" value="EM"/>
    <property type="resolution" value="3.70 A"/>
    <property type="chains" value="g=18-156"/>
</dbReference>
<dbReference type="PDB" id="7TOQ">
    <property type="method" value="EM"/>
    <property type="resolution" value="3.10 A"/>
    <property type="chains" value="AS31=83-150"/>
</dbReference>
<dbReference type="PDB" id="7TOR">
    <property type="method" value="EM"/>
    <property type="resolution" value="2.90 A"/>
    <property type="chains" value="AS31=83-150"/>
</dbReference>
<dbReference type="PDB" id="8BHF">
    <property type="method" value="EM"/>
    <property type="resolution" value="3.10 A"/>
    <property type="chains" value="g3=83-150"/>
</dbReference>
<dbReference type="PDB" id="8BTK">
    <property type="method" value="EM"/>
    <property type="resolution" value="3.50 A"/>
    <property type="chains" value="AC=18-156"/>
</dbReference>
<dbReference type="PDB" id="8P03">
    <property type="method" value="EM"/>
    <property type="resolution" value="3.04 A"/>
    <property type="chains" value="f=82-152"/>
</dbReference>
<dbReference type="PDB" id="8P09">
    <property type="method" value="EM"/>
    <property type="resolution" value="3.30 A"/>
    <property type="chains" value="f=82-152"/>
</dbReference>
<dbReference type="PDB" id="8P2K">
    <property type="method" value="EM"/>
    <property type="resolution" value="2.90 A"/>
    <property type="chains" value="AC=18-156"/>
</dbReference>
<dbReference type="PDB" id="8SCB">
    <property type="method" value="EM"/>
    <property type="resolution" value="2.50 A"/>
    <property type="chains" value="ff=1-156"/>
</dbReference>
<dbReference type="PDB" id="8VFT">
    <property type="method" value="EM"/>
    <property type="resolution" value="3.30 A"/>
    <property type="chains" value="ff=1-156"/>
</dbReference>
<dbReference type="PDB" id="9C8K">
    <property type="method" value="EM"/>
    <property type="resolution" value="3.10 A"/>
    <property type="chains" value="f=1-156"/>
</dbReference>
<dbReference type="PDB" id="9F1B">
    <property type="method" value="EM"/>
    <property type="resolution" value="3.01 A"/>
    <property type="chains" value="AC=1-156"/>
</dbReference>
<dbReference type="PDB" id="9F1C">
    <property type="method" value="EM"/>
    <property type="resolution" value="3.78 A"/>
    <property type="chains" value="AC=1-156"/>
</dbReference>
<dbReference type="PDB" id="9F1D">
    <property type="method" value="EM"/>
    <property type="resolution" value="3.26 A"/>
    <property type="chains" value="AC=1-156"/>
</dbReference>
<dbReference type="PDBsum" id="3JAG"/>
<dbReference type="PDBsum" id="3JAH"/>
<dbReference type="PDBsum" id="3JAI"/>
<dbReference type="PDBsum" id="4D5L"/>
<dbReference type="PDBsum" id="4D61"/>
<dbReference type="PDBsum" id="4KZX"/>
<dbReference type="PDBsum" id="4KZY"/>
<dbReference type="PDBsum" id="4KZZ"/>
<dbReference type="PDBsum" id="5K0Y"/>
<dbReference type="PDBsum" id="5LZS"/>
<dbReference type="PDBsum" id="5LZT"/>
<dbReference type="PDBsum" id="5LZU"/>
<dbReference type="PDBsum" id="5LZV"/>
<dbReference type="PDBsum" id="5LZW"/>
<dbReference type="PDBsum" id="5LZX"/>
<dbReference type="PDBsum" id="5LZY"/>
<dbReference type="PDBsum" id="5LZZ"/>
<dbReference type="PDBsum" id="6D90"/>
<dbReference type="PDBsum" id="6D9J"/>
<dbReference type="PDBsum" id="6GZ3"/>
<dbReference type="PDBsum" id="6HCF"/>
<dbReference type="PDBsum" id="6HCJ"/>
<dbReference type="PDBsum" id="6HCM"/>
<dbReference type="PDBsum" id="6HCQ"/>
<dbReference type="PDBsum" id="6MTB"/>
<dbReference type="PDBsum" id="6MTC"/>
<dbReference type="PDBsum" id="6MTD"/>
<dbReference type="PDBsum" id="6MTE"/>
<dbReference type="PDBsum" id="6P4G"/>
<dbReference type="PDBsum" id="6P4H"/>
<dbReference type="PDBsum" id="6P5I"/>
<dbReference type="PDBsum" id="6P5J"/>
<dbReference type="PDBsum" id="6P5K"/>
<dbReference type="PDBsum" id="6P5N"/>
<dbReference type="PDBsum" id="6R5Q"/>
<dbReference type="PDBsum" id="6R6G"/>
<dbReference type="PDBsum" id="6R6P"/>
<dbReference type="PDBsum" id="6R7Q"/>
<dbReference type="PDBsum" id="6SGC"/>
<dbReference type="PDBsum" id="6W2S"/>
<dbReference type="PDBsum" id="6W2T"/>
<dbReference type="PDBsum" id="6YAL"/>
<dbReference type="PDBsum" id="6YAM"/>
<dbReference type="PDBsum" id="6YAN"/>
<dbReference type="PDBsum" id="7A01"/>
<dbReference type="PDBsum" id="7MDZ"/>
<dbReference type="PDBsum" id="7NWG"/>
<dbReference type="PDBsum" id="7O7Y"/>
<dbReference type="PDBsum" id="7O7Z"/>
<dbReference type="PDBsum" id="7O80"/>
<dbReference type="PDBsum" id="7O81"/>
<dbReference type="PDBsum" id="7SYG"/>
<dbReference type="PDBsum" id="7SYH"/>
<dbReference type="PDBsum" id="7SYI"/>
<dbReference type="PDBsum" id="7SYJ"/>
<dbReference type="PDBsum" id="7SYK"/>
<dbReference type="PDBsum" id="7SYL"/>
<dbReference type="PDBsum" id="7SYM"/>
<dbReference type="PDBsum" id="7SYN"/>
<dbReference type="PDBsum" id="7SYO"/>
<dbReference type="PDBsum" id="7SYP"/>
<dbReference type="PDBsum" id="7SYQ"/>
<dbReference type="PDBsum" id="7SYR"/>
<dbReference type="PDBsum" id="7SYS"/>
<dbReference type="PDBsum" id="7SYT"/>
<dbReference type="PDBsum" id="7SYU"/>
<dbReference type="PDBsum" id="7SYV"/>
<dbReference type="PDBsum" id="7SYW"/>
<dbReference type="PDBsum" id="7SYX"/>
<dbReference type="PDBsum" id="7TOQ"/>
<dbReference type="PDBsum" id="7TOR"/>
<dbReference type="PDBsum" id="8BHF"/>
<dbReference type="PDBsum" id="8BTK"/>
<dbReference type="PDBsum" id="8P03"/>
<dbReference type="PDBsum" id="8P09"/>
<dbReference type="PDBsum" id="8P2K"/>
<dbReference type="PDBsum" id="8SCB"/>
<dbReference type="PDBsum" id="8VFT"/>
<dbReference type="PDBsum" id="9C8K"/>
<dbReference type="PDBsum" id="9F1B"/>
<dbReference type="PDBsum" id="9F1C"/>
<dbReference type="PDBsum" id="9F1D"/>
<dbReference type="EMDB" id="EMD-0098"/>
<dbReference type="EMDB" id="EMD-0099"/>
<dbReference type="EMDB" id="EMD-0100"/>
<dbReference type="EMDB" id="EMD-0192"/>
<dbReference type="EMDB" id="EMD-0194"/>
<dbReference type="EMDB" id="EMD-0195"/>
<dbReference type="EMDB" id="EMD-0197"/>
<dbReference type="EMDB" id="EMD-10181"/>
<dbReference type="EMDB" id="EMD-10760"/>
<dbReference type="EMDB" id="EMD-10761"/>
<dbReference type="EMDB" id="EMD-10762"/>
<dbReference type="EMDB" id="EMD-11590"/>
<dbReference type="EMDB" id="EMD-12631"/>
<dbReference type="EMDB" id="EMD-12756"/>
<dbReference type="EMDB" id="EMD-12757"/>
<dbReference type="EMDB" id="EMD-12758"/>
<dbReference type="EMDB" id="EMD-12759"/>
<dbReference type="EMDB" id="EMD-16052"/>
<dbReference type="EMDB" id="EMD-16232"/>
<dbReference type="EMDB" id="EMD-17329"/>
<dbReference type="EMDB" id="EMD-17330"/>
<dbReference type="EMDB" id="EMD-17367"/>
<dbReference type="EMDB" id="EMD-20248"/>
<dbReference type="EMDB" id="EMD-20249"/>
<dbReference type="EMDB" id="EMD-20255"/>
<dbReference type="EMDB" id="EMD-20256"/>
<dbReference type="EMDB" id="EMD-20257"/>
<dbReference type="EMDB" id="EMD-20258"/>
<dbReference type="EMDB" id="EMD-21529"/>
<dbReference type="EMDB" id="EMD-21530"/>
<dbReference type="EMDB" id="EMD-22432"/>
<dbReference type="EMDB" id="EMD-22433"/>
<dbReference type="EMDB" id="EMD-23785"/>
<dbReference type="EMDB" id="EMD-25527"/>
<dbReference type="EMDB" id="EMD-25528"/>
<dbReference type="EMDB" id="EMD-25529"/>
<dbReference type="EMDB" id="EMD-25530"/>
<dbReference type="EMDB" id="EMD-25531"/>
<dbReference type="EMDB" id="EMD-25532"/>
<dbReference type="EMDB" id="EMD-25533"/>
<dbReference type="EMDB" id="EMD-25534"/>
<dbReference type="EMDB" id="EMD-25535"/>
<dbReference type="EMDB" id="EMD-25536"/>
<dbReference type="EMDB" id="EMD-25537"/>
<dbReference type="EMDB" id="EMD-25538"/>
<dbReference type="EMDB" id="EMD-25539"/>
<dbReference type="EMDB" id="EMD-25540"/>
<dbReference type="EMDB" id="EMD-25541"/>
<dbReference type="EMDB" id="EMD-25542"/>
<dbReference type="EMDB" id="EMD-25543"/>
<dbReference type="EMDB" id="EMD-25544"/>
<dbReference type="EMDB" id="EMD-26035"/>
<dbReference type="EMDB" id="EMD-26036"/>
<dbReference type="EMDB" id="EMD-40344"/>
<dbReference type="EMDB" id="EMD-4130"/>
<dbReference type="EMDB" id="EMD-4131"/>
<dbReference type="EMDB" id="EMD-4132"/>
<dbReference type="EMDB" id="EMD-4133"/>
<dbReference type="EMDB" id="EMD-4134"/>
<dbReference type="EMDB" id="EMD-4135"/>
<dbReference type="EMDB" id="EMD-4136"/>
<dbReference type="EMDB" id="EMD-4137"/>
<dbReference type="EMDB" id="EMD-43189"/>
<dbReference type="EMDB" id="EMD-45307"/>
<dbReference type="EMDB" id="EMD-4729"/>
<dbReference type="EMDB" id="EMD-4735"/>
<dbReference type="EMDB" id="EMD-4737"/>
<dbReference type="EMDB" id="EMD-4745"/>
<dbReference type="EMDB" id="EMD-50124"/>
<dbReference type="EMDB" id="EMD-50125"/>
<dbReference type="EMDB" id="EMD-50126"/>
<dbReference type="EMDB" id="EMD-7834"/>
<dbReference type="EMDB" id="EMD-7836"/>
<dbReference type="EMDB" id="EMD-8190"/>
<dbReference type="EMDB" id="EMD-9237"/>
<dbReference type="EMDB" id="EMD-9239"/>
<dbReference type="EMDB" id="EMD-9240"/>
<dbReference type="EMDB" id="EMD-9242"/>
<dbReference type="SMR" id="G1SK22"/>
<dbReference type="FunCoup" id="G1SK22">
    <property type="interactions" value="1373"/>
</dbReference>
<dbReference type="IntAct" id="G1SK22">
    <property type="interactions" value="1"/>
</dbReference>
<dbReference type="STRING" id="9986.ENSOCUP00000003131"/>
<dbReference type="GeneID" id="100348379"/>
<dbReference type="KEGG" id="ocu:100348379"/>
<dbReference type="CTD" id="6233"/>
<dbReference type="HOGENOM" id="CLU_010412_2_0_1"/>
<dbReference type="InParanoid" id="G1SK22"/>
<dbReference type="OMA" id="GVFMAFH"/>
<dbReference type="OrthoDB" id="428577at2759"/>
<dbReference type="TreeFam" id="TF300036"/>
<dbReference type="EvolutionaryTrace" id="G1SK22"/>
<dbReference type="Proteomes" id="UP000001811">
    <property type="component" value="Unplaced"/>
</dbReference>
<dbReference type="Bgee" id="ENSOCUG00000003613">
    <property type="expression patterns" value="Expressed in skin of back and 15 other cell types or tissues"/>
</dbReference>
<dbReference type="GO" id="GO:0022626">
    <property type="term" value="C:cytosolic ribosome"/>
    <property type="evidence" value="ECO:0000314"/>
    <property type="project" value="UniProtKB"/>
</dbReference>
<dbReference type="GO" id="GO:0005730">
    <property type="term" value="C:nucleolus"/>
    <property type="evidence" value="ECO:0007669"/>
    <property type="project" value="UniProtKB-SubCell"/>
</dbReference>
<dbReference type="GO" id="GO:1990904">
    <property type="term" value="C:ribonucleoprotein complex"/>
    <property type="evidence" value="ECO:0007669"/>
    <property type="project" value="UniProtKB-KW"/>
</dbReference>
<dbReference type="GO" id="GO:0003735">
    <property type="term" value="F:structural constituent of ribosome"/>
    <property type="evidence" value="ECO:0000314"/>
    <property type="project" value="UniProtKB"/>
</dbReference>
<dbReference type="GO" id="GO:0008270">
    <property type="term" value="F:zinc ion binding"/>
    <property type="evidence" value="ECO:0007669"/>
    <property type="project" value="UniProtKB-KW"/>
</dbReference>
<dbReference type="GO" id="GO:0006412">
    <property type="term" value="P:translation"/>
    <property type="evidence" value="ECO:0007669"/>
    <property type="project" value="InterPro"/>
</dbReference>
<dbReference type="CDD" id="cd01803">
    <property type="entry name" value="Ubl_ubiquitin"/>
    <property type="match status" value="1"/>
</dbReference>
<dbReference type="FunFam" id="3.10.20.90:FF:000008">
    <property type="entry name" value="Ubiquitin-40S ribosomal protein S27a"/>
    <property type="match status" value="1"/>
</dbReference>
<dbReference type="Gene3D" id="6.20.50.150">
    <property type="match status" value="1"/>
</dbReference>
<dbReference type="Gene3D" id="3.10.20.90">
    <property type="entry name" value="Phosphatidylinositol 3-kinase Catalytic Subunit, Chain A, domain 1"/>
    <property type="match status" value="1"/>
</dbReference>
<dbReference type="InterPro" id="IPR002906">
    <property type="entry name" value="Ribosomal_eS31"/>
</dbReference>
<dbReference type="InterPro" id="IPR038582">
    <property type="entry name" value="Ribosomal_eS31_euk-type_sf"/>
</dbReference>
<dbReference type="InterPro" id="IPR011332">
    <property type="entry name" value="Ribosomal_zn-bd"/>
</dbReference>
<dbReference type="InterPro" id="IPR000626">
    <property type="entry name" value="Ubiquitin-like_dom"/>
</dbReference>
<dbReference type="InterPro" id="IPR029071">
    <property type="entry name" value="Ubiquitin-like_domsf"/>
</dbReference>
<dbReference type="InterPro" id="IPR019954">
    <property type="entry name" value="Ubiquitin_CS"/>
</dbReference>
<dbReference type="InterPro" id="IPR019956">
    <property type="entry name" value="Ubiquitin_dom"/>
</dbReference>
<dbReference type="InterPro" id="IPR050158">
    <property type="entry name" value="Ubiquitin_ubiquitin-like"/>
</dbReference>
<dbReference type="PANTHER" id="PTHR10666">
    <property type="entry name" value="UBIQUITIN"/>
    <property type="match status" value="1"/>
</dbReference>
<dbReference type="Pfam" id="PF01599">
    <property type="entry name" value="Ribosomal_S27"/>
    <property type="match status" value="1"/>
</dbReference>
<dbReference type="Pfam" id="PF00240">
    <property type="entry name" value="ubiquitin"/>
    <property type="match status" value="1"/>
</dbReference>
<dbReference type="PRINTS" id="PR00348">
    <property type="entry name" value="UBIQUITIN"/>
</dbReference>
<dbReference type="SMART" id="SM01402">
    <property type="entry name" value="Ribosomal_S27"/>
    <property type="match status" value="1"/>
</dbReference>
<dbReference type="SMART" id="SM00213">
    <property type="entry name" value="UBQ"/>
    <property type="match status" value="1"/>
</dbReference>
<dbReference type="SUPFAM" id="SSF54236">
    <property type="entry name" value="Ubiquitin-like"/>
    <property type="match status" value="1"/>
</dbReference>
<dbReference type="SUPFAM" id="SSF57829">
    <property type="entry name" value="Zn-binding ribosomal proteins"/>
    <property type="match status" value="1"/>
</dbReference>
<dbReference type="PROSITE" id="PS50053">
    <property type="entry name" value="UBIQUITIN_2"/>
    <property type="match status" value="1"/>
</dbReference>
<name>RS27A_RABIT</name>